<organism>
    <name type="scientific">Chlamydomonas reinhardtii</name>
    <name type="common">Chlamydomonas smithii</name>
    <dbReference type="NCBI Taxonomy" id="3055"/>
    <lineage>
        <taxon>Eukaryota</taxon>
        <taxon>Viridiplantae</taxon>
        <taxon>Chlorophyta</taxon>
        <taxon>core chlorophytes</taxon>
        <taxon>Chlorophyceae</taxon>
        <taxon>CS clade</taxon>
        <taxon>Chlamydomonadales</taxon>
        <taxon>Chlamydomonadaceae</taxon>
        <taxon>Chlamydomonas</taxon>
    </lineage>
</organism>
<proteinExistence type="inferred from homology"/>
<comment type="function">
    <text>Core component of nucleosome. Nucleosomes wrap and compact DNA into chromatin, limiting DNA accessibility to the cellular machineries which require DNA as a template. Histones thereby play a central role in transcription regulation, DNA repair, DNA replication and chromosomal stability. DNA accessibility is regulated via a complex set of post-translational modifications of histones, also called histone code, and nucleosome remodeling.</text>
</comment>
<comment type="subunit">
    <text>The nucleosome is a histone octamer containing two molecules each of H2A, H2B, H3 and H4 assembled in one H3-H4 heterotetramer and two H2A-H2B heterodimers. The octamer wraps approximately 147 bp of DNA.</text>
</comment>
<comment type="subcellular location">
    <subcellularLocation>
        <location>Nucleus</location>
    </subcellularLocation>
    <subcellularLocation>
        <location>Chromosome</location>
    </subcellularLocation>
</comment>
<comment type="similarity">
    <text evidence="1">Belongs to the histone H2A family.</text>
</comment>
<accession>P50567</accession>
<reference key="1">
    <citation type="journal article" date="1995" name="Nucleic Acids Res.">
        <title>The uni chromosome of Chlamydomonas: histone genes and nucleosome structure.</title>
        <authorList>
            <person name="Walther Z."/>
            <person name="Hall J.L."/>
        </authorList>
    </citation>
    <scope>NUCLEOTIDE SEQUENCE [GENOMIC DNA]</scope>
    <source>
        <strain>137c / CC-125</strain>
    </source>
</reference>
<reference key="2">
    <citation type="journal article" date="1995" name="Curr. Genet.">
        <title>The organization structure and regulatory elements of Chlamydomonas histone genes reveal features linking plant and animal genes.</title>
        <authorList>
            <person name="Fabry S."/>
            <person name="Mueller K."/>
            <person name="Lindauer A."/>
            <person name="Park P.B."/>
            <person name="Cornelius T."/>
            <person name="Schmitt R."/>
        </authorList>
    </citation>
    <scope>NUCLEOTIDE SEQUENCE [GENOMIC DNA]</scope>
</reference>
<dbReference type="EMBL" id="L41841">
    <property type="protein sequence ID" value="AAA99968.1"/>
    <property type="molecule type" value="Genomic_DNA"/>
</dbReference>
<dbReference type="EMBL" id="U16724">
    <property type="protein sequence ID" value="AAA98447.1"/>
    <property type="molecule type" value="Genomic_DNA"/>
</dbReference>
<dbReference type="EMBL" id="U16725">
    <property type="protein sequence ID" value="AAA98451.1"/>
    <property type="molecule type" value="Genomic_DNA"/>
</dbReference>
<dbReference type="PIR" id="S59126">
    <property type="entry name" value="S59126"/>
</dbReference>
<dbReference type="RefSeq" id="XP_001690672.1">
    <property type="nucleotide sequence ID" value="XM_001690620.1"/>
</dbReference>
<dbReference type="RefSeq" id="XP_001690682.1">
    <property type="nucleotide sequence ID" value="XM_001690630.1"/>
</dbReference>
<dbReference type="RefSeq" id="XP_001690722.1">
    <property type="nucleotide sequence ID" value="XM_001690670.1"/>
</dbReference>
<dbReference type="RefSeq" id="XP_001691528.1">
    <property type="nucleotide sequence ID" value="XM_001691476.1"/>
</dbReference>
<dbReference type="RefSeq" id="XP_001691688.1">
    <property type="nucleotide sequence ID" value="XM_001691636.1"/>
</dbReference>
<dbReference type="RefSeq" id="XP_001693466.1">
    <property type="nucleotide sequence ID" value="XM_001693414.1"/>
</dbReference>
<dbReference type="RefSeq" id="XP_001697820.1">
    <property type="nucleotide sequence ID" value="XM_001697768.1"/>
</dbReference>
<dbReference type="RefSeq" id="XP_001700399.1">
    <property type="nucleotide sequence ID" value="XM_001700347.1"/>
</dbReference>
<dbReference type="RefSeq" id="XP_001700409.1">
    <property type="nucleotide sequence ID" value="XM_001700357.1"/>
</dbReference>
<dbReference type="RefSeq" id="XP_001700425.1">
    <property type="nucleotide sequence ID" value="XM_001700373.1"/>
</dbReference>
<dbReference type="RefSeq" id="XP_001700454.1">
    <property type="nucleotide sequence ID" value="XM_001700402.1"/>
</dbReference>
<dbReference type="SMR" id="P50567"/>
<dbReference type="PaxDb" id="3055-EDO95786"/>
<dbReference type="ProMEX" id="P50567"/>
<dbReference type="EnsemblPlants" id="PNW70181">
    <property type="protein sequence ID" value="PNW70181"/>
    <property type="gene ID" value="CHLRE_17g709200v5"/>
</dbReference>
<dbReference type="EnsemblPlants" id="PNW70208">
    <property type="protein sequence ID" value="PNW70208"/>
    <property type="gene ID" value="CHLRE_17g710400v5"/>
</dbReference>
<dbReference type="EnsemblPlants" id="PNW70243">
    <property type="protein sequence ID" value="PNW70243"/>
    <property type="gene ID" value="CHLRE_17g711700v5"/>
</dbReference>
<dbReference type="EnsemblPlants" id="PNW70283">
    <property type="protein sequence ID" value="PNW70283"/>
    <property type="gene ID" value="CHLRE_17g713400v5"/>
</dbReference>
<dbReference type="EnsemblPlants" id="PNW70300">
    <property type="protein sequence ID" value="PNW70300"/>
    <property type="gene ID" value="CHLRE_17g714100v5"/>
</dbReference>
<dbReference type="EnsemblPlants" id="PNW70309">
    <property type="protein sequence ID" value="PNW70309"/>
    <property type="gene ID" value="CHLRE_17g714500v5"/>
</dbReference>
<dbReference type="EnsemblPlants" id="PNW73726">
    <property type="protein sequence ID" value="PNW73726"/>
    <property type="gene ID" value="CHLRE_13g570100v5"/>
</dbReference>
<dbReference type="EnsemblPlants" id="PNW82107">
    <property type="protein sequence ID" value="PNW82107"/>
    <property type="gene ID" value="CHLRE_06g274200v5"/>
</dbReference>
<dbReference type="EnsemblPlants" id="PNW82160">
    <property type="protein sequence ID" value="PNW82160"/>
    <property type="gene ID" value="CHLRE_06g276500v5"/>
</dbReference>
<dbReference type="EnsemblPlants" id="PNW82171">
    <property type="protein sequence ID" value="PNW82171"/>
    <property type="gene ID" value="CHLRE_06g276950v5"/>
</dbReference>
<dbReference type="Gramene" id="PNW70181">
    <property type="protein sequence ID" value="PNW70181"/>
    <property type="gene ID" value="CHLRE_17g709200v5"/>
</dbReference>
<dbReference type="Gramene" id="PNW70208">
    <property type="protein sequence ID" value="PNW70208"/>
    <property type="gene ID" value="CHLRE_17g710400v5"/>
</dbReference>
<dbReference type="Gramene" id="PNW70243">
    <property type="protein sequence ID" value="PNW70243"/>
    <property type="gene ID" value="CHLRE_17g711700v5"/>
</dbReference>
<dbReference type="Gramene" id="PNW70283">
    <property type="protein sequence ID" value="PNW70283"/>
    <property type="gene ID" value="CHLRE_17g713400v5"/>
</dbReference>
<dbReference type="Gramene" id="PNW70300">
    <property type="protein sequence ID" value="PNW70300"/>
    <property type="gene ID" value="CHLRE_17g714100v5"/>
</dbReference>
<dbReference type="Gramene" id="PNW70309">
    <property type="protein sequence ID" value="PNW70309"/>
    <property type="gene ID" value="CHLRE_17g714500v5"/>
</dbReference>
<dbReference type="Gramene" id="PNW73726">
    <property type="protein sequence ID" value="PNW73726"/>
    <property type="gene ID" value="CHLRE_13g570100v5"/>
</dbReference>
<dbReference type="Gramene" id="PNW82107">
    <property type="protein sequence ID" value="PNW82107"/>
    <property type="gene ID" value="CHLRE_06g274200v5"/>
</dbReference>
<dbReference type="Gramene" id="PNW82160">
    <property type="protein sequence ID" value="PNW82160"/>
    <property type="gene ID" value="CHLRE_06g276500v5"/>
</dbReference>
<dbReference type="Gramene" id="PNW82171">
    <property type="protein sequence ID" value="PNW82171"/>
    <property type="gene ID" value="CHLRE_06g276950v5"/>
</dbReference>
<dbReference type="KEGG" id="cre:CHLRE_06g276500v5"/>
<dbReference type="KEGG" id="cre:CHLRE_06g276950v5"/>
<dbReference type="KEGG" id="cre:CHLRE_13g570100v5"/>
<dbReference type="KEGG" id="cre:CHLRE_17g709200v5"/>
<dbReference type="KEGG" id="cre:CHLRE_17g710400v5"/>
<dbReference type="KEGG" id="cre:CHLRE_17g711700v5"/>
<dbReference type="KEGG" id="cre:CHLRE_17g713400v5"/>
<dbReference type="KEGG" id="cre:CHLRE_17g714100v5"/>
<dbReference type="KEGG" id="cre:CHLRE_17g714500v5"/>
<dbReference type="eggNOG" id="KOG1756">
    <property type="taxonomic scope" value="Eukaryota"/>
</dbReference>
<dbReference type="HOGENOM" id="CLU_062828_3_0_1"/>
<dbReference type="OMA" id="WCPKIAR"/>
<dbReference type="OrthoDB" id="507009at2759"/>
<dbReference type="GO" id="GO:0000786">
    <property type="term" value="C:nucleosome"/>
    <property type="evidence" value="ECO:0007669"/>
    <property type="project" value="UniProtKB-KW"/>
</dbReference>
<dbReference type="GO" id="GO:0005634">
    <property type="term" value="C:nucleus"/>
    <property type="evidence" value="ECO:0007669"/>
    <property type="project" value="UniProtKB-SubCell"/>
</dbReference>
<dbReference type="GO" id="GO:0003677">
    <property type="term" value="F:DNA binding"/>
    <property type="evidence" value="ECO:0007669"/>
    <property type="project" value="UniProtKB-KW"/>
</dbReference>
<dbReference type="GO" id="GO:0046982">
    <property type="term" value="F:protein heterodimerization activity"/>
    <property type="evidence" value="ECO:0007669"/>
    <property type="project" value="InterPro"/>
</dbReference>
<dbReference type="GO" id="GO:0030527">
    <property type="term" value="F:structural constituent of chromatin"/>
    <property type="evidence" value="ECO:0007669"/>
    <property type="project" value="InterPro"/>
</dbReference>
<dbReference type="CDD" id="cd00074">
    <property type="entry name" value="HFD_H2A"/>
    <property type="match status" value="1"/>
</dbReference>
<dbReference type="FunFam" id="1.10.20.10:FF:000009">
    <property type="entry name" value="Histone H2A"/>
    <property type="match status" value="1"/>
</dbReference>
<dbReference type="Gene3D" id="1.10.20.10">
    <property type="entry name" value="Histone, subunit A"/>
    <property type="match status" value="1"/>
</dbReference>
<dbReference type="InterPro" id="IPR009072">
    <property type="entry name" value="Histone-fold"/>
</dbReference>
<dbReference type="InterPro" id="IPR002119">
    <property type="entry name" value="Histone_H2A"/>
</dbReference>
<dbReference type="InterPro" id="IPR007125">
    <property type="entry name" value="Histone_H2A/H2B/H3"/>
</dbReference>
<dbReference type="InterPro" id="IPR032454">
    <property type="entry name" value="Histone_H2A_C"/>
</dbReference>
<dbReference type="InterPro" id="IPR032458">
    <property type="entry name" value="Histone_H2A_CS"/>
</dbReference>
<dbReference type="PANTHER" id="PTHR23430">
    <property type="entry name" value="HISTONE H2A"/>
    <property type="match status" value="1"/>
</dbReference>
<dbReference type="Pfam" id="PF00125">
    <property type="entry name" value="Histone"/>
    <property type="match status" value="1"/>
</dbReference>
<dbReference type="Pfam" id="PF16211">
    <property type="entry name" value="Histone_H2A_C"/>
    <property type="match status" value="1"/>
</dbReference>
<dbReference type="PRINTS" id="PR00620">
    <property type="entry name" value="HISTONEH2A"/>
</dbReference>
<dbReference type="SMART" id="SM00414">
    <property type="entry name" value="H2A"/>
    <property type="match status" value="1"/>
</dbReference>
<dbReference type="SUPFAM" id="SSF47113">
    <property type="entry name" value="Histone-fold"/>
    <property type="match status" value="1"/>
</dbReference>
<dbReference type="PROSITE" id="PS00046">
    <property type="entry name" value="HISTONE_H2A"/>
    <property type="match status" value="1"/>
</dbReference>
<name>H2A_CHLRE</name>
<gene>
    <name type="primary">H2A-II</name>
</gene>
<gene>
    <name type="primary">H2A-III</name>
</gene>
<keyword id="KW-0158">Chromosome</keyword>
<keyword id="KW-0238">DNA-binding</keyword>
<keyword id="KW-0544">Nucleosome core</keyword>
<keyword id="KW-0539">Nucleus</keyword>
<sequence>MAGRGKGKTSGKKAVSRSAKAGLQFPVGRIARYLKKGKYAERIGAGAPVYLAAVLEYLTAEVLELAGNAARDNKKNRIVPRHIQLAIRNDEELGKLLGEVTIASGGVLPNIHAVLLPKKTKGGKGEETA</sequence>
<feature type="chain" id="PRO_0000055218" description="Histone H2A">
    <location>
        <begin position="1"/>
        <end position="129"/>
    </location>
</feature>
<evidence type="ECO:0000305" key="1"/>
<protein>
    <recommendedName>
        <fullName>Histone H2A</fullName>
    </recommendedName>
</protein>